<evidence type="ECO:0000255" key="1">
    <source>
        <dbReference type="PROSITE-ProRule" id="PRU01182"/>
    </source>
</evidence>
<evidence type="ECO:0000305" key="2"/>
<sequence length="228" mass="25725">MDNNFKIKDLPKNERPQERLIRYGAEVLSNSELLAVILRTGTKNQNIMMLASSLIKETGGLDQLFNQSIEELTKIKGIGVTKAVQILALSELSKRFKTYKSGNEYKINTPLDVSNLVMEDMKYLKQEKLKILILNTKNIVKYIRDVFIGTLNSSIVHPREIFCEAIKKNGASIIICHNHPSGDPTPSKEDINITLRLKECGKLIGIDLLDHIIIGENKYVSMKEKGTI</sequence>
<comment type="similarity">
    <text evidence="2">Belongs to the UPF0758 family.</text>
</comment>
<protein>
    <recommendedName>
        <fullName>UPF0758 protein CLI_3057</fullName>
    </recommendedName>
</protein>
<name>Y3057_CLOBL</name>
<dbReference type="EMBL" id="CP000728">
    <property type="protein sequence ID" value="ABS41996.1"/>
    <property type="molecule type" value="Genomic_DNA"/>
</dbReference>
<dbReference type="RefSeq" id="WP_012100751.1">
    <property type="nucleotide sequence ID" value="NC_009699.1"/>
</dbReference>
<dbReference type="SMR" id="A7GHL9"/>
<dbReference type="KEGG" id="cbf:CLI_3057"/>
<dbReference type="HOGENOM" id="CLU_073529_0_2_9"/>
<dbReference type="Proteomes" id="UP000002410">
    <property type="component" value="Chromosome"/>
</dbReference>
<dbReference type="GO" id="GO:0046872">
    <property type="term" value="F:metal ion binding"/>
    <property type="evidence" value="ECO:0007669"/>
    <property type="project" value="UniProtKB-KW"/>
</dbReference>
<dbReference type="GO" id="GO:0008237">
    <property type="term" value="F:metallopeptidase activity"/>
    <property type="evidence" value="ECO:0007669"/>
    <property type="project" value="UniProtKB-KW"/>
</dbReference>
<dbReference type="GO" id="GO:0006508">
    <property type="term" value="P:proteolysis"/>
    <property type="evidence" value="ECO:0007669"/>
    <property type="project" value="UniProtKB-KW"/>
</dbReference>
<dbReference type="CDD" id="cd08071">
    <property type="entry name" value="MPN_DUF2466"/>
    <property type="match status" value="1"/>
</dbReference>
<dbReference type="Gene3D" id="1.10.150.20">
    <property type="entry name" value="5' to 3' exonuclease, C-terminal subdomain"/>
    <property type="match status" value="1"/>
</dbReference>
<dbReference type="Gene3D" id="3.40.140.10">
    <property type="entry name" value="Cytidine Deaminase, domain 2"/>
    <property type="match status" value="1"/>
</dbReference>
<dbReference type="InterPro" id="IPR037518">
    <property type="entry name" value="MPN"/>
</dbReference>
<dbReference type="InterPro" id="IPR025657">
    <property type="entry name" value="RadC_JAB"/>
</dbReference>
<dbReference type="InterPro" id="IPR010994">
    <property type="entry name" value="RuvA_2-like"/>
</dbReference>
<dbReference type="InterPro" id="IPR001405">
    <property type="entry name" value="UPF0758"/>
</dbReference>
<dbReference type="InterPro" id="IPR020891">
    <property type="entry name" value="UPF0758_CS"/>
</dbReference>
<dbReference type="InterPro" id="IPR046778">
    <property type="entry name" value="UPF0758_N"/>
</dbReference>
<dbReference type="NCBIfam" id="NF000642">
    <property type="entry name" value="PRK00024.1"/>
    <property type="match status" value="1"/>
</dbReference>
<dbReference type="NCBIfam" id="TIGR00608">
    <property type="entry name" value="radc"/>
    <property type="match status" value="1"/>
</dbReference>
<dbReference type="PANTHER" id="PTHR30471">
    <property type="entry name" value="DNA REPAIR PROTEIN RADC"/>
    <property type="match status" value="1"/>
</dbReference>
<dbReference type="PANTHER" id="PTHR30471:SF3">
    <property type="entry name" value="UPF0758 PROTEIN YEES-RELATED"/>
    <property type="match status" value="1"/>
</dbReference>
<dbReference type="Pfam" id="PF04002">
    <property type="entry name" value="RadC"/>
    <property type="match status" value="1"/>
</dbReference>
<dbReference type="Pfam" id="PF20582">
    <property type="entry name" value="UPF0758_N"/>
    <property type="match status" value="1"/>
</dbReference>
<dbReference type="SUPFAM" id="SSF102712">
    <property type="entry name" value="JAB1/MPN domain"/>
    <property type="match status" value="1"/>
</dbReference>
<dbReference type="SUPFAM" id="SSF47781">
    <property type="entry name" value="RuvA domain 2-like"/>
    <property type="match status" value="1"/>
</dbReference>
<dbReference type="PROSITE" id="PS50249">
    <property type="entry name" value="MPN"/>
    <property type="match status" value="1"/>
</dbReference>
<dbReference type="PROSITE" id="PS01302">
    <property type="entry name" value="UPF0758"/>
    <property type="match status" value="1"/>
</dbReference>
<accession>A7GHL9</accession>
<keyword id="KW-0378">Hydrolase</keyword>
<keyword id="KW-0479">Metal-binding</keyword>
<keyword id="KW-0482">Metalloprotease</keyword>
<keyword id="KW-0645">Protease</keyword>
<keyword id="KW-0862">Zinc</keyword>
<reference key="1">
    <citation type="submission" date="2007-06" db="EMBL/GenBank/DDBJ databases">
        <authorList>
            <person name="Brinkac L.M."/>
            <person name="Daugherty S."/>
            <person name="Dodson R.J."/>
            <person name="Madupu R."/>
            <person name="Brown J.L."/>
            <person name="Bruce D."/>
            <person name="Detter C."/>
            <person name="Munk C."/>
            <person name="Smith L.A."/>
            <person name="Smith T.J."/>
            <person name="White O."/>
            <person name="Brettin T.S."/>
        </authorList>
    </citation>
    <scope>NUCLEOTIDE SEQUENCE [LARGE SCALE GENOMIC DNA]</scope>
    <source>
        <strain>Langeland / NCTC 10281 / Type F</strain>
    </source>
</reference>
<gene>
    <name type="ordered locus">CLI_3057</name>
</gene>
<proteinExistence type="inferred from homology"/>
<organism>
    <name type="scientific">Clostridium botulinum (strain Langeland / NCTC 10281 / Type F)</name>
    <dbReference type="NCBI Taxonomy" id="441772"/>
    <lineage>
        <taxon>Bacteria</taxon>
        <taxon>Bacillati</taxon>
        <taxon>Bacillota</taxon>
        <taxon>Clostridia</taxon>
        <taxon>Eubacteriales</taxon>
        <taxon>Clostridiaceae</taxon>
        <taxon>Clostridium</taxon>
    </lineage>
</organism>
<feature type="chain" id="PRO_1000001652" description="UPF0758 protein CLI_3057">
    <location>
        <begin position="1"/>
        <end position="228"/>
    </location>
</feature>
<feature type="domain" description="MPN" evidence="1">
    <location>
        <begin position="106"/>
        <end position="228"/>
    </location>
</feature>
<feature type="short sequence motif" description="JAMM motif" evidence="1">
    <location>
        <begin position="177"/>
        <end position="190"/>
    </location>
</feature>
<feature type="binding site" evidence="1">
    <location>
        <position position="177"/>
    </location>
    <ligand>
        <name>Zn(2+)</name>
        <dbReference type="ChEBI" id="CHEBI:29105"/>
        <note>catalytic</note>
    </ligand>
</feature>
<feature type="binding site" evidence="1">
    <location>
        <position position="179"/>
    </location>
    <ligand>
        <name>Zn(2+)</name>
        <dbReference type="ChEBI" id="CHEBI:29105"/>
        <note>catalytic</note>
    </ligand>
</feature>
<feature type="binding site" evidence="1">
    <location>
        <position position="190"/>
    </location>
    <ligand>
        <name>Zn(2+)</name>
        <dbReference type="ChEBI" id="CHEBI:29105"/>
        <note>catalytic</note>
    </ligand>
</feature>